<proteinExistence type="evidence at protein level"/>
<name>ELAV2_MOUSE</name>
<evidence type="ECO:0000250" key="1">
    <source>
        <dbReference type="UniProtKB" id="Q12926"/>
    </source>
</evidence>
<evidence type="ECO:0000255" key="2">
    <source>
        <dbReference type="PROSITE-ProRule" id="PRU00176"/>
    </source>
</evidence>
<evidence type="ECO:0000256" key="3">
    <source>
        <dbReference type="SAM" id="MobiDB-lite"/>
    </source>
</evidence>
<evidence type="ECO:0000269" key="4">
    <source>
    </source>
</evidence>
<evidence type="ECO:0000269" key="5">
    <source>
    </source>
</evidence>
<evidence type="ECO:0000269" key="6">
    <source>
    </source>
</evidence>
<evidence type="ECO:0000305" key="7"/>
<reference key="1">
    <citation type="journal article" date="1996" name="Nucleic Acids Res.">
        <title>Target specificity of neuronal RNA-binding protein, Mel-N1: direct binding to the 3' untranslated region of its own mRNA.</title>
        <authorList>
            <person name="Abe R."/>
            <person name="Yamamoto K."/>
            <person name="Sakamoto H."/>
        </authorList>
    </citation>
    <scope>NUCLEOTIDE SEQUENCE [MRNA]</scope>
    <scope>FUNCTION</scope>
    <scope>TISSUE SPECIFICITY</scope>
</reference>
<reference key="2">
    <citation type="journal article" date="2001" name="Proc. Natl. Acad. Sci. U.S.A.">
        <title>Posttranscriptional regulation of gene expression in learning by the neuronal ELAV-like mRNA-stabilizing proteins.</title>
        <authorList>
            <person name="Quattrone A."/>
            <person name="Pascale A."/>
            <person name="Nogues X."/>
            <person name="Zhao W."/>
            <person name="Gusev P."/>
            <person name="Pacini A."/>
            <person name="Alkon D.L."/>
        </authorList>
    </citation>
    <scope>TISSUE SPECIFICITY</scope>
    <scope>INDUCTION BY MEMORY TRAINING</scope>
</reference>
<reference key="3">
    <citation type="journal article" date="2011" name="Biochimie">
        <title>Microtubule association of a neuronal RNA-binding protein HuD through its binding to the light chain of MAP1B.</title>
        <authorList>
            <person name="Fujiwara Y."/>
            <person name="Kasashima K."/>
            <person name="Saito K."/>
            <person name="Fukuda M."/>
            <person name="Fukao A."/>
            <person name="Sasano Y."/>
            <person name="Inoue K."/>
            <person name="Fujiwara T."/>
            <person name="Sakamoto H."/>
        </authorList>
    </citation>
    <scope>INTERACTION WITH MAP1B LIGHT CHAIN LC1</scope>
</reference>
<keyword id="KW-0597">Phosphoprotein</keyword>
<keyword id="KW-1185">Reference proteome</keyword>
<keyword id="KW-0677">Repeat</keyword>
<keyword id="KW-0694">RNA-binding</keyword>
<organism>
    <name type="scientific">Mus musculus</name>
    <name type="common">Mouse</name>
    <dbReference type="NCBI Taxonomy" id="10090"/>
    <lineage>
        <taxon>Eukaryota</taxon>
        <taxon>Metazoa</taxon>
        <taxon>Chordata</taxon>
        <taxon>Craniata</taxon>
        <taxon>Vertebrata</taxon>
        <taxon>Euteleostomi</taxon>
        <taxon>Mammalia</taxon>
        <taxon>Eutheria</taxon>
        <taxon>Euarchontoglires</taxon>
        <taxon>Glires</taxon>
        <taxon>Rodentia</taxon>
        <taxon>Myomorpha</taxon>
        <taxon>Muroidea</taxon>
        <taxon>Muridae</taxon>
        <taxon>Murinae</taxon>
        <taxon>Mus</taxon>
        <taxon>Mus</taxon>
    </lineage>
</organism>
<accession>Q60899</accession>
<dbReference type="EMBL" id="U29088">
    <property type="protein sequence ID" value="AAC52644.1"/>
    <property type="molecule type" value="mRNA"/>
</dbReference>
<dbReference type="CCDS" id="CCDS18355.1"/>
<dbReference type="PIR" id="JC6057">
    <property type="entry name" value="JC6057"/>
</dbReference>
<dbReference type="RefSeq" id="NP_034616.1">
    <property type="nucleotide sequence ID" value="NM_010486.2"/>
</dbReference>
<dbReference type="RefSeq" id="XP_006502852.1">
    <property type="nucleotide sequence ID" value="XM_006502789.2"/>
</dbReference>
<dbReference type="RefSeq" id="XP_006502853.1">
    <property type="nucleotide sequence ID" value="XM_006502790.4"/>
</dbReference>
<dbReference type="RefSeq" id="XP_006502854.1">
    <property type="nucleotide sequence ID" value="XM_006502791.4"/>
</dbReference>
<dbReference type="RefSeq" id="XP_036019611.1">
    <property type="nucleotide sequence ID" value="XM_036163718.1"/>
</dbReference>
<dbReference type="RefSeq" id="XP_036019613.1">
    <property type="nucleotide sequence ID" value="XM_036163720.1"/>
</dbReference>
<dbReference type="RefSeq" id="XP_036019614.1">
    <property type="nucleotide sequence ID" value="XM_036163721.1"/>
</dbReference>
<dbReference type="SMR" id="Q60899"/>
<dbReference type="BioGRID" id="200483">
    <property type="interactions" value="34"/>
</dbReference>
<dbReference type="FunCoup" id="Q60899">
    <property type="interactions" value="342"/>
</dbReference>
<dbReference type="IntAct" id="Q60899">
    <property type="interactions" value="6"/>
</dbReference>
<dbReference type="MINT" id="Q60899"/>
<dbReference type="STRING" id="10090.ENSMUSP00000102737"/>
<dbReference type="GlyGen" id="Q60899">
    <property type="glycosylation" value="1 site, 1 N-linked glycan (1 site)"/>
</dbReference>
<dbReference type="iPTMnet" id="Q60899"/>
<dbReference type="PhosphoSitePlus" id="Q60899"/>
<dbReference type="PaxDb" id="10090-ENSMUSP00000099863"/>
<dbReference type="ProteomicsDB" id="277817"/>
<dbReference type="Pumba" id="Q60899"/>
<dbReference type="Antibodypedia" id="10496">
    <property type="antibodies" value="337 antibodies from 31 providers"/>
</dbReference>
<dbReference type="DNASU" id="15569"/>
<dbReference type="Ensembl" id="ENSMUST00000008633.15">
    <property type="protein sequence ID" value="ENSMUSP00000008633.9"/>
    <property type="gene ID" value="ENSMUSG00000008489.19"/>
</dbReference>
<dbReference type="GeneID" id="15569"/>
<dbReference type="KEGG" id="mmu:15569"/>
<dbReference type="UCSC" id="uc008ton.2">
    <property type="organism name" value="mouse"/>
</dbReference>
<dbReference type="AGR" id="MGI:1100887"/>
<dbReference type="CTD" id="1993"/>
<dbReference type="MGI" id="MGI:1100887">
    <property type="gene designation" value="Elavl2"/>
</dbReference>
<dbReference type="VEuPathDB" id="HostDB:ENSMUSG00000008489"/>
<dbReference type="eggNOG" id="KOG0145">
    <property type="taxonomic scope" value="Eukaryota"/>
</dbReference>
<dbReference type="GeneTree" id="ENSGT00940000156823"/>
<dbReference type="HOGENOM" id="CLU_026186_2_2_1"/>
<dbReference type="InParanoid" id="Q60899"/>
<dbReference type="OMA" id="YPSCHSA"/>
<dbReference type="OrthoDB" id="266020at2759"/>
<dbReference type="BioGRID-ORCS" id="15569">
    <property type="hits" value="0 hits in 80 CRISPR screens"/>
</dbReference>
<dbReference type="ChiTaRS" id="Elavl2">
    <property type="organism name" value="mouse"/>
</dbReference>
<dbReference type="PRO" id="PR:Q60899"/>
<dbReference type="Proteomes" id="UP000000589">
    <property type="component" value="Chromosome 4"/>
</dbReference>
<dbReference type="RNAct" id="Q60899">
    <property type="molecule type" value="protein"/>
</dbReference>
<dbReference type="Bgee" id="ENSMUSG00000008489">
    <property type="expression patterns" value="Expressed in superior cervical ganglion and 217 other cell types or tissues"/>
</dbReference>
<dbReference type="ExpressionAtlas" id="Q60899">
    <property type="expression patterns" value="baseline and differential"/>
</dbReference>
<dbReference type="GO" id="GO:1990904">
    <property type="term" value="C:ribonucleoprotein complex"/>
    <property type="evidence" value="ECO:0007669"/>
    <property type="project" value="InterPro"/>
</dbReference>
<dbReference type="GO" id="GO:0045202">
    <property type="term" value="C:synapse"/>
    <property type="evidence" value="ECO:0000314"/>
    <property type="project" value="SynGO"/>
</dbReference>
<dbReference type="GO" id="GO:0003723">
    <property type="term" value="F:RNA binding"/>
    <property type="evidence" value="ECO:0007669"/>
    <property type="project" value="UniProtKB-KW"/>
</dbReference>
<dbReference type="GO" id="GO:1990830">
    <property type="term" value="P:cellular response to leukemia inhibitory factor"/>
    <property type="evidence" value="ECO:0000270"/>
    <property type="project" value="MGI"/>
</dbReference>
<dbReference type="CDD" id="cd12771">
    <property type="entry name" value="RRM1_HuB"/>
    <property type="match status" value="1"/>
</dbReference>
<dbReference type="CDD" id="cd12775">
    <property type="entry name" value="RRM2_HuB"/>
    <property type="match status" value="1"/>
</dbReference>
<dbReference type="CDD" id="cd12654">
    <property type="entry name" value="RRM3_HuB"/>
    <property type="match status" value="1"/>
</dbReference>
<dbReference type="FunFam" id="3.30.70.330:FF:000006">
    <property type="entry name" value="ELAV-like 3"/>
    <property type="match status" value="1"/>
</dbReference>
<dbReference type="FunFam" id="3.30.70.330:FF:000005">
    <property type="entry name" value="ELAV-like protein"/>
    <property type="match status" value="1"/>
</dbReference>
<dbReference type="FunFam" id="3.30.70.330:FF:000017">
    <property type="entry name" value="ELAV-like protein"/>
    <property type="match status" value="1"/>
</dbReference>
<dbReference type="Gene3D" id="3.30.70.330">
    <property type="match status" value="3"/>
</dbReference>
<dbReference type="InterPro" id="IPR006548">
    <property type="entry name" value="ELAD_HU_SF"/>
</dbReference>
<dbReference type="InterPro" id="IPR034999">
    <property type="entry name" value="HuB_RRM2"/>
</dbReference>
<dbReference type="InterPro" id="IPR034914">
    <property type="entry name" value="HuB_RRM3"/>
</dbReference>
<dbReference type="InterPro" id="IPR002343">
    <property type="entry name" value="Hud_Sxl_RNA"/>
</dbReference>
<dbReference type="InterPro" id="IPR012677">
    <property type="entry name" value="Nucleotide-bd_a/b_plait_sf"/>
</dbReference>
<dbReference type="InterPro" id="IPR035979">
    <property type="entry name" value="RBD_domain_sf"/>
</dbReference>
<dbReference type="InterPro" id="IPR000504">
    <property type="entry name" value="RRM_dom"/>
</dbReference>
<dbReference type="NCBIfam" id="TIGR01661">
    <property type="entry name" value="ELAV_HUD_SF"/>
    <property type="match status" value="1"/>
</dbReference>
<dbReference type="PANTHER" id="PTHR10352">
    <property type="entry name" value="EUKARYOTIC TRANSLATION INITIATION FACTOR 3 SUBUNIT G"/>
    <property type="match status" value="1"/>
</dbReference>
<dbReference type="Pfam" id="PF00076">
    <property type="entry name" value="RRM_1"/>
    <property type="match status" value="3"/>
</dbReference>
<dbReference type="PRINTS" id="PR00961">
    <property type="entry name" value="HUDSXLRNA"/>
</dbReference>
<dbReference type="SMART" id="SM00360">
    <property type="entry name" value="RRM"/>
    <property type="match status" value="3"/>
</dbReference>
<dbReference type="SUPFAM" id="SSF54928">
    <property type="entry name" value="RNA-binding domain, RBD"/>
    <property type="match status" value="2"/>
</dbReference>
<dbReference type="PROSITE" id="PS50102">
    <property type="entry name" value="RRM"/>
    <property type="match status" value="3"/>
</dbReference>
<gene>
    <name type="primary">Elavl2</name>
    <name type="synonym">Hub</name>
</gene>
<feature type="chain" id="PRO_0000081580" description="ELAV-like protein 2">
    <location>
        <begin position="1"/>
        <end position="360"/>
    </location>
</feature>
<feature type="domain" description="RRM 1" evidence="2">
    <location>
        <begin position="39"/>
        <end position="117"/>
    </location>
</feature>
<feature type="domain" description="RRM 2" evidence="2">
    <location>
        <begin position="125"/>
        <end position="205"/>
    </location>
</feature>
<feature type="domain" description="RRM 3" evidence="2">
    <location>
        <begin position="277"/>
        <end position="355"/>
    </location>
</feature>
<feature type="region of interest" description="Disordered" evidence="3">
    <location>
        <begin position="1"/>
        <end position="36"/>
    </location>
</feature>
<feature type="modified residue" description="Phosphoserine" evidence="1">
    <location>
        <position position="221"/>
    </location>
</feature>
<comment type="function">
    <text evidence="6">RNA-binding protein that binds to the 3' untranslated region (3'UTR) of target mRNAs (PubMed:8668530). Seems to recognize a GAAA motif (PubMed:8668530). Can bind to its own 3'UTR, the FOS 3'UTR and the ID 3'UTR (PubMed:8668530).</text>
</comment>
<comment type="subunit">
    <text evidence="1 5">Interacts with IGF2BP1 (By similarity). Interacts with MAP1B light chain LC1 (PubMed:21288476).</text>
</comment>
<comment type="tissue specificity">
    <text evidence="4 6">Brain; neural-specific (PubMed:8668530). Expressed in the hippocampus (PubMed:11573004).</text>
</comment>
<comment type="induction">
    <text evidence="4">Up-regulated after memory training in radial arm maze experiments.</text>
</comment>
<comment type="similarity">
    <text evidence="7">Belongs to the RRM elav family.</text>
</comment>
<protein>
    <recommendedName>
        <fullName>ELAV-like protein 2</fullName>
    </recommendedName>
    <alternativeName>
        <fullName>ELAV-like neuronal protein 1</fullName>
    </alternativeName>
    <alternativeName>
        <fullName>Hu-antigen B</fullName>
        <shortName>HuB</shortName>
    </alternativeName>
    <alternativeName>
        <fullName>Nervous system-specific RNA-binding protein Mel-N1</fullName>
    </alternativeName>
</protein>
<sequence>METQLSNGPTCNNTANGPTTVNNNCSSPVDSGNTEDSKTNLIVNYLPQNMTQEELKSLFGSIGEIESCKLVRDKITGQSLGYGFVNYIDPKDAEKAINTLNGLRLQTKTIKVSYARPSSASIRDANLYVSGLPKTMTQKELEQLFSQYGRIITSRILVDQVTGISRGVGFIRFDKRIEAEEAIKGLNGQKPPGATEPITVKFANNPSQKTNQAILSQLYQSPNRRYPGPLAQQAQRFRLDNLLNMAYGVKSRFSPMTIDGMTSLAGINIPGHPGTGWCIFVYNLAPDADESILWQMFGPFGAVTNVKVIRDFNTNKCKGFGFVTMTNYDEAAMAIASLNGYRLGDRVLQVSFKTNKTHKA</sequence>